<feature type="chain" id="PRO_0000205276" description="Glucan endo-1,3-beta-glucosidase">
    <location>
        <begin position="1" status="less than"/>
        <end position="255"/>
    </location>
</feature>
<feature type="active site" description="Proton donor" evidence="1">
    <location>
        <position position="48"/>
    </location>
</feature>
<feature type="active site" description="Nucleophile" evidence="1">
    <location>
        <position position="183"/>
    </location>
</feature>
<feature type="non-terminal residue">
    <location>
        <position position="1"/>
    </location>
</feature>
<evidence type="ECO:0000250" key="1">
    <source>
        <dbReference type="UniProtKB" id="O22317"/>
    </source>
</evidence>
<evidence type="ECO:0000305" key="2"/>
<organism>
    <name type="scientific">Glycine max</name>
    <name type="common">Soybean</name>
    <name type="synonym">Glycine hispida</name>
    <dbReference type="NCBI Taxonomy" id="3847"/>
    <lineage>
        <taxon>Eukaryota</taxon>
        <taxon>Viridiplantae</taxon>
        <taxon>Streptophyta</taxon>
        <taxon>Embryophyta</taxon>
        <taxon>Tracheophyta</taxon>
        <taxon>Spermatophyta</taxon>
        <taxon>Magnoliopsida</taxon>
        <taxon>eudicotyledons</taxon>
        <taxon>Gunneridae</taxon>
        <taxon>Pentapetalae</taxon>
        <taxon>rosids</taxon>
        <taxon>fabids</taxon>
        <taxon>Fabales</taxon>
        <taxon>Fabaceae</taxon>
        <taxon>Papilionoideae</taxon>
        <taxon>50 kb inversion clade</taxon>
        <taxon>NPAAA clade</taxon>
        <taxon>indigoferoid/millettioid clade</taxon>
        <taxon>Phaseoleae</taxon>
        <taxon>Glycine</taxon>
        <taxon>Glycine subgen. Soja</taxon>
    </lineage>
</organism>
<keyword id="KW-0326">Glycosidase</keyword>
<keyword id="KW-0378">Hydrolase</keyword>
<keyword id="KW-1185">Reference proteome</keyword>
<reference key="1">
    <citation type="journal article" date="1995" name="Planta">
        <title>Binding-protein expression is subject to temporal, developmental and stress-induced regulation in terminally differentiated soybean organs.</title>
        <authorList>
            <person name="Kalinski A."/>
            <person name="Rowley D.L."/>
            <person name="Loer D.S."/>
            <person name="Foley C."/>
            <person name="Buta G."/>
            <person name="Herman E.M."/>
        </authorList>
    </citation>
    <scope>NUCLEOTIDE SEQUENCE [MRNA]</scope>
    <source>
        <strain>cv. Century 84</strain>
        <tissue>Leaf</tissue>
    </source>
</reference>
<accession>P52395</accession>
<dbReference type="EC" id="3.2.1.39"/>
<dbReference type="EMBL" id="U08405">
    <property type="protein sequence ID" value="AAA81955.1"/>
    <property type="molecule type" value="mRNA"/>
</dbReference>
<dbReference type="PIR" id="T06359">
    <property type="entry name" value="T06359"/>
</dbReference>
<dbReference type="SMR" id="P52395"/>
<dbReference type="STRING" id="3847.P52395"/>
<dbReference type="CAZy" id="GH17">
    <property type="family name" value="Glycoside Hydrolase Family 17"/>
</dbReference>
<dbReference type="PaxDb" id="3847-GLYMA12G02410.1"/>
<dbReference type="ProMEX" id="P52395"/>
<dbReference type="eggNOG" id="ENOG502QQ3M">
    <property type="taxonomic scope" value="Eukaryota"/>
</dbReference>
<dbReference type="InParanoid" id="P52395"/>
<dbReference type="Proteomes" id="UP000008827">
    <property type="component" value="Unplaced"/>
</dbReference>
<dbReference type="GO" id="GO:0042973">
    <property type="term" value="F:glucan endo-1,3-beta-D-glucosidase activity"/>
    <property type="evidence" value="ECO:0007669"/>
    <property type="project" value="UniProtKB-EC"/>
</dbReference>
<dbReference type="GO" id="GO:0005975">
    <property type="term" value="P:carbohydrate metabolic process"/>
    <property type="evidence" value="ECO:0007669"/>
    <property type="project" value="InterPro"/>
</dbReference>
<dbReference type="FunFam" id="3.20.20.80:FF:000320">
    <property type="entry name" value="Glucan endo-1,3-beta-glucosidase"/>
    <property type="match status" value="1"/>
</dbReference>
<dbReference type="Gene3D" id="3.20.20.80">
    <property type="entry name" value="Glycosidases"/>
    <property type="match status" value="1"/>
</dbReference>
<dbReference type="InterPro" id="IPR000490">
    <property type="entry name" value="Glyco_hydro_17"/>
</dbReference>
<dbReference type="InterPro" id="IPR044965">
    <property type="entry name" value="Glyco_hydro_17_plant"/>
</dbReference>
<dbReference type="InterPro" id="IPR017853">
    <property type="entry name" value="Glycoside_hydrolase_SF"/>
</dbReference>
<dbReference type="PANTHER" id="PTHR32227">
    <property type="entry name" value="GLUCAN ENDO-1,3-BETA-GLUCOSIDASE BG1-RELATED-RELATED"/>
    <property type="match status" value="1"/>
</dbReference>
<dbReference type="Pfam" id="PF00332">
    <property type="entry name" value="Glyco_hydro_17"/>
    <property type="match status" value="1"/>
</dbReference>
<dbReference type="SUPFAM" id="SSF51445">
    <property type="entry name" value="(Trans)glycosidases"/>
    <property type="match status" value="1"/>
</dbReference>
<dbReference type="PROSITE" id="PS00587">
    <property type="entry name" value="GLYCOSYL_HYDROL_F17"/>
    <property type="match status" value="1"/>
</dbReference>
<name>E13B_SOYBN</name>
<comment type="catalytic activity">
    <reaction>
        <text>Hydrolysis of (1-&gt;3)-beta-D-glucosidic linkages in (1-&gt;3)-beta-D-glucans.</text>
        <dbReference type="EC" id="3.2.1.39"/>
    </reaction>
</comment>
<comment type="similarity">
    <text evidence="2">Belongs to the glycosyl hydrolase 17 family.</text>
</comment>
<sequence length="255" mass="27671">HEIELIMDVAKETLQSLTDSNAATDWVNKYVTPYSQDVNFKYIAVGNEIHPNTNVAQYILSAMTNIQNAISSRKFTIKVSTAIDSTLITNSYPPNDGVFTSDAEPYIKPIINFLVSNGAPLLANVYPYFAYANDQSIPLAYALFTQQGNNDVGYQNLFDAMLDSIYAALENVGASNLQIVVSESGWPSEGGAGASIDNAGTYYANLIRHASSGDGTPKRPGESIETYLFGRCLSENQKQVLILSVIFGLSLPISS</sequence>
<protein>
    <recommendedName>
        <fullName>Glucan endo-1,3-beta-glucosidase</fullName>
        <ecNumber>3.2.1.39</ecNumber>
    </recommendedName>
    <alternativeName>
        <fullName>(1-&gt;3)-beta-glucan endohydrolase</fullName>
        <shortName>(1-&gt;3)-beta-glucanase</shortName>
    </alternativeName>
    <alternativeName>
        <fullName>Beta-1,3-endoglucanase</fullName>
    </alternativeName>
</protein>
<proteinExistence type="evidence at transcript level"/>